<gene>
    <name evidence="1" type="primary">murB</name>
    <name type="ordered locus">NGO_0394</name>
</gene>
<accession>Q5F9J9</accession>
<organism>
    <name type="scientific">Neisseria gonorrhoeae (strain ATCC 700825 / FA 1090)</name>
    <dbReference type="NCBI Taxonomy" id="242231"/>
    <lineage>
        <taxon>Bacteria</taxon>
        <taxon>Pseudomonadati</taxon>
        <taxon>Pseudomonadota</taxon>
        <taxon>Betaproteobacteria</taxon>
        <taxon>Neisseriales</taxon>
        <taxon>Neisseriaceae</taxon>
        <taxon>Neisseria</taxon>
    </lineage>
</organism>
<dbReference type="EC" id="1.3.1.98" evidence="1"/>
<dbReference type="EMBL" id="AE004969">
    <property type="protein sequence ID" value="AAW89138.1"/>
    <property type="molecule type" value="Genomic_DNA"/>
</dbReference>
<dbReference type="RefSeq" id="WP_003692788.1">
    <property type="nucleotide sequence ID" value="NC_002946.2"/>
</dbReference>
<dbReference type="RefSeq" id="YP_207550.1">
    <property type="nucleotide sequence ID" value="NC_002946.2"/>
</dbReference>
<dbReference type="SMR" id="Q5F9J9"/>
<dbReference type="STRING" id="242231.NGO_0394"/>
<dbReference type="KEGG" id="ngo:NGO_0394"/>
<dbReference type="PATRIC" id="fig|242231.10.peg.475"/>
<dbReference type="HOGENOM" id="CLU_035304_0_0_4"/>
<dbReference type="UniPathway" id="UPA00219"/>
<dbReference type="Proteomes" id="UP000000535">
    <property type="component" value="Chromosome"/>
</dbReference>
<dbReference type="GO" id="GO:0005829">
    <property type="term" value="C:cytosol"/>
    <property type="evidence" value="ECO:0007669"/>
    <property type="project" value="TreeGrafter"/>
</dbReference>
<dbReference type="GO" id="GO:0071949">
    <property type="term" value="F:FAD binding"/>
    <property type="evidence" value="ECO:0007669"/>
    <property type="project" value="InterPro"/>
</dbReference>
<dbReference type="GO" id="GO:0008762">
    <property type="term" value="F:UDP-N-acetylmuramate dehydrogenase activity"/>
    <property type="evidence" value="ECO:0007669"/>
    <property type="project" value="UniProtKB-UniRule"/>
</dbReference>
<dbReference type="GO" id="GO:0051301">
    <property type="term" value="P:cell division"/>
    <property type="evidence" value="ECO:0007669"/>
    <property type="project" value="UniProtKB-KW"/>
</dbReference>
<dbReference type="GO" id="GO:0071555">
    <property type="term" value="P:cell wall organization"/>
    <property type="evidence" value="ECO:0007669"/>
    <property type="project" value="UniProtKB-KW"/>
</dbReference>
<dbReference type="GO" id="GO:0009252">
    <property type="term" value="P:peptidoglycan biosynthetic process"/>
    <property type="evidence" value="ECO:0007669"/>
    <property type="project" value="UniProtKB-UniRule"/>
</dbReference>
<dbReference type="GO" id="GO:0008360">
    <property type="term" value="P:regulation of cell shape"/>
    <property type="evidence" value="ECO:0007669"/>
    <property type="project" value="UniProtKB-KW"/>
</dbReference>
<dbReference type="Gene3D" id="3.30.465.10">
    <property type="match status" value="1"/>
</dbReference>
<dbReference type="Gene3D" id="3.90.78.10">
    <property type="entry name" value="UDP-N-acetylenolpyruvoylglucosamine reductase, C-terminal domain"/>
    <property type="match status" value="1"/>
</dbReference>
<dbReference type="Gene3D" id="3.30.43.10">
    <property type="entry name" value="Uridine Diphospho-n-acetylenolpyruvylglucosamine Reductase, domain 2"/>
    <property type="match status" value="1"/>
</dbReference>
<dbReference type="HAMAP" id="MF_00037">
    <property type="entry name" value="MurB"/>
    <property type="match status" value="1"/>
</dbReference>
<dbReference type="InterPro" id="IPR016166">
    <property type="entry name" value="FAD-bd_PCMH"/>
</dbReference>
<dbReference type="InterPro" id="IPR036318">
    <property type="entry name" value="FAD-bd_PCMH-like_sf"/>
</dbReference>
<dbReference type="InterPro" id="IPR016167">
    <property type="entry name" value="FAD-bd_PCMH_sub1"/>
</dbReference>
<dbReference type="InterPro" id="IPR016169">
    <property type="entry name" value="FAD-bd_PCMH_sub2"/>
</dbReference>
<dbReference type="InterPro" id="IPR003170">
    <property type="entry name" value="MurB"/>
</dbReference>
<dbReference type="InterPro" id="IPR011601">
    <property type="entry name" value="MurB_C"/>
</dbReference>
<dbReference type="InterPro" id="IPR036635">
    <property type="entry name" value="MurB_C_sf"/>
</dbReference>
<dbReference type="InterPro" id="IPR006094">
    <property type="entry name" value="Oxid_FAD_bind_N"/>
</dbReference>
<dbReference type="NCBIfam" id="TIGR00179">
    <property type="entry name" value="murB"/>
    <property type="match status" value="1"/>
</dbReference>
<dbReference type="NCBIfam" id="NF000755">
    <property type="entry name" value="PRK00046.1"/>
    <property type="match status" value="1"/>
</dbReference>
<dbReference type="NCBIfam" id="NF010478">
    <property type="entry name" value="PRK13903.1"/>
    <property type="match status" value="1"/>
</dbReference>
<dbReference type="PANTHER" id="PTHR21071">
    <property type="entry name" value="UDP-N-ACETYLENOLPYRUVOYLGLUCOSAMINE REDUCTASE"/>
    <property type="match status" value="1"/>
</dbReference>
<dbReference type="PANTHER" id="PTHR21071:SF4">
    <property type="entry name" value="UDP-N-ACETYLENOLPYRUVOYLGLUCOSAMINE REDUCTASE"/>
    <property type="match status" value="1"/>
</dbReference>
<dbReference type="Pfam" id="PF01565">
    <property type="entry name" value="FAD_binding_4"/>
    <property type="match status" value="1"/>
</dbReference>
<dbReference type="Pfam" id="PF02873">
    <property type="entry name" value="MurB_C"/>
    <property type="match status" value="1"/>
</dbReference>
<dbReference type="SUPFAM" id="SSF56176">
    <property type="entry name" value="FAD-binding/transporter-associated domain-like"/>
    <property type="match status" value="1"/>
</dbReference>
<dbReference type="SUPFAM" id="SSF56194">
    <property type="entry name" value="Uridine diphospho-N-Acetylenolpyruvylglucosamine reductase, MurB, C-terminal domain"/>
    <property type="match status" value="1"/>
</dbReference>
<dbReference type="PROSITE" id="PS51387">
    <property type="entry name" value="FAD_PCMH"/>
    <property type="match status" value="1"/>
</dbReference>
<protein>
    <recommendedName>
        <fullName evidence="1">UDP-N-acetylenolpyruvoylglucosamine reductase</fullName>
        <ecNumber evidence="1">1.3.1.98</ecNumber>
    </recommendedName>
    <alternativeName>
        <fullName evidence="1">UDP-N-acetylmuramate dehydrogenase</fullName>
    </alternativeName>
</protein>
<reference key="1">
    <citation type="submission" date="2003-03" db="EMBL/GenBank/DDBJ databases">
        <title>The complete genome sequence of Neisseria gonorrhoeae.</title>
        <authorList>
            <person name="Lewis L.A."/>
            <person name="Gillaspy A.F."/>
            <person name="McLaughlin R.E."/>
            <person name="Gipson M."/>
            <person name="Ducey T.F."/>
            <person name="Ownbey T."/>
            <person name="Hartman K."/>
            <person name="Nydick C."/>
            <person name="Carson M.B."/>
            <person name="Vaughn J."/>
            <person name="Thomson C."/>
            <person name="Song L."/>
            <person name="Lin S."/>
            <person name="Yuan X."/>
            <person name="Najar F."/>
            <person name="Zhan M."/>
            <person name="Ren Q."/>
            <person name="Zhu H."/>
            <person name="Qi S."/>
            <person name="Kenton S.M."/>
            <person name="Lai H."/>
            <person name="White J.D."/>
            <person name="Clifton S."/>
            <person name="Roe B.A."/>
            <person name="Dyer D.W."/>
        </authorList>
    </citation>
    <scope>NUCLEOTIDE SEQUENCE [LARGE SCALE GENOMIC DNA]</scope>
    <source>
        <strain>ATCC 700825 / FA 1090</strain>
    </source>
</reference>
<keyword id="KW-0131">Cell cycle</keyword>
<keyword id="KW-0132">Cell division</keyword>
<keyword id="KW-0133">Cell shape</keyword>
<keyword id="KW-0961">Cell wall biogenesis/degradation</keyword>
<keyword id="KW-0963">Cytoplasm</keyword>
<keyword id="KW-0274">FAD</keyword>
<keyword id="KW-0285">Flavoprotein</keyword>
<keyword id="KW-0521">NADP</keyword>
<keyword id="KW-0560">Oxidoreductase</keyword>
<keyword id="KW-0573">Peptidoglycan synthesis</keyword>
<keyword id="KW-1185">Reference proteome</keyword>
<feature type="chain" id="PRO_0000224696" description="UDP-N-acetylenolpyruvoylglucosamine reductase">
    <location>
        <begin position="1"/>
        <end position="346"/>
    </location>
</feature>
<feature type="domain" description="FAD-binding PCMH-type" evidence="1">
    <location>
        <begin position="18"/>
        <end position="189"/>
    </location>
</feature>
<feature type="active site" evidence="1">
    <location>
        <position position="165"/>
    </location>
</feature>
<feature type="active site" description="Proton donor" evidence="1">
    <location>
        <position position="240"/>
    </location>
</feature>
<feature type="active site" evidence="1">
    <location>
        <position position="336"/>
    </location>
</feature>
<proteinExistence type="inferred from homology"/>
<evidence type="ECO:0000255" key="1">
    <source>
        <dbReference type="HAMAP-Rule" id="MF_00037"/>
    </source>
</evidence>
<sequence>MQPIRYRTDLTPYNTFGLHAQARAFIALKHADELRDIVRLPEFDRDTVLWLGGGSNILLMQDYDGLVVHMENKGIREIARSDGMVLIEAQAGEIWHDFVLHTVALGLSGLENLSLIPGTVGASPVQNIGAYGVEAKDVIHSVRCFDLDTETFVTLSNADCRFAYRESLFKQEGKGRYVIVSVVFALKTHFVPNLGYGDLAAKVAELSAGREATAKDVSDAVSAIRNSKLPDPKVLGNVGSFFKNPVVSAEKAATLLQRHPDMPRYPQPDGSVKLAAGWLIDQCRLKGFQIGGAAVHDKQALVLVNKNNASANDVRQLAQHIKFTVFARFQVELHAEPNWLPTSFSL</sequence>
<comment type="function">
    <text evidence="1">Cell wall formation.</text>
</comment>
<comment type="catalytic activity">
    <reaction evidence="1">
        <text>UDP-N-acetyl-alpha-D-muramate + NADP(+) = UDP-N-acetyl-3-O-(1-carboxyvinyl)-alpha-D-glucosamine + NADPH + H(+)</text>
        <dbReference type="Rhea" id="RHEA:12248"/>
        <dbReference type="ChEBI" id="CHEBI:15378"/>
        <dbReference type="ChEBI" id="CHEBI:57783"/>
        <dbReference type="ChEBI" id="CHEBI:58349"/>
        <dbReference type="ChEBI" id="CHEBI:68483"/>
        <dbReference type="ChEBI" id="CHEBI:70757"/>
        <dbReference type="EC" id="1.3.1.98"/>
    </reaction>
</comment>
<comment type="cofactor">
    <cofactor evidence="1">
        <name>FAD</name>
        <dbReference type="ChEBI" id="CHEBI:57692"/>
    </cofactor>
</comment>
<comment type="pathway">
    <text evidence="1">Cell wall biogenesis; peptidoglycan biosynthesis.</text>
</comment>
<comment type="subcellular location">
    <subcellularLocation>
        <location evidence="1">Cytoplasm</location>
    </subcellularLocation>
</comment>
<comment type="similarity">
    <text evidence="1">Belongs to the MurB family.</text>
</comment>
<name>MURB_NEIG1</name>